<name>HRURF_HUMAN</name>
<dbReference type="EMBL" id="AC105206">
    <property type="status" value="NOT_ANNOTATED_CDS"/>
    <property type="molecule type" value="Genomic_DNA"/>
</dbReference>
<dbReference type="CCDS" id="CCDS94263.1"/>
<dbReference type="RefSeq" id="NP_001381061.1">
    <property type="nucleotide sequence ID" value="NM_001394132.1"/>
</dbReference>
<dbReference type="SMR" id="P0DUH7"/>
<dbReference type="Ensembl" id="ENST00000518377.3">
    <property type="protein sequence ID" value="ENSP00000505144.1"/>
    <property type="gene ID" value="ENSG00000288677.2"/>
</dbReference>
<dbReference type="GeneID" id="120766137"/>
<dbReference type="MANE-Select" id="ENST00000518377.3">
    <property type="protein sequence ID" value="ENSP00000505144.1"/>
    <property type="RefSeq nucleotide sequence ID" value="NM_001394132.1"/>
    <property type="RefSeq protein sequence ID" value="NP_001381061.1"/>
</dbReference>
<dbReference type="AGR" id="HGNC:55085"/>
<dbReference type="GeneCards" id="HRURF"/>
<dbReference type="HGNC" id="HGNC:55085">
    <property type="gene designation" value="HRURF"/>
</dbReference>
<dbReference type="HPA" id="ENSG00000288677">
    <property type="expression patterns" value="Not detected"/>
</dbReference>
<dbReference type="MalaCards" id="HRURF"/>
<dbReference type="MIM" id="146550">
    <property type="type" value="phenotype"/>
</dbReference>
<dbReference type="MIM" id="619257">
    <property type="type" value="gene"/>
</dbReference>
<dbReference type="neXtProt" id="NX_P0DUH7"/>
<dbReference type="GeneTree" id="ENSGT01090000263470"/>
<dbReference type="InParanoid" id="P0DUH7"/>
<dbReference type="OrthoDB" id="9561836at2759"/>
<dbReference type="PRO" id="PR:P0DUH7"/>
<dbReference type="Proteomes" id="UP000005640">
    <property type="component" value="Chromosome 8"/>
</dbReference>
<dbReference type="GO" id="GO:0006417">
    <property type="term" value="P:regulation of translation"/>
    <property type="evidence" value="ECO:0007669"/>
    <property type="project" value="UniProtKB-KW"/>
</dbReference>
<evidence type="ECO:0000269" key="1">
    <source>
    </source>
</evidence>
<evidence type="ECO:0000269" key="2">
    <source>
    </source>
</evidence>
<evidence type="ECO:0000269" key="3">
    <source>
    </source>
</evidence>
<evidence type="ECO:0000305" key="4"/>
<evidence type="ECO:0000312" key="5">
    <source>
        <dbReference type="HGNC" id="HGNC:55085"/>
    </source>
</evidence>
<gene>
    <name evidence="5" type="primary">HRURF</name>
    <name type="synonym">U2HR</name>
</gene>
<proteinExistence type="evidence at protein level"/>
<organism>
    <name type="scientific">Homo sapiens</name>
    <name type="common">Human</name>
    <dbReference type="NCBI Taxonomy" id="9606"/>
    <lineage>
        <taxon>Eukaryota</taxon>
        <taxon>Metazoa</taxon>
        <taxon>Chordata</taxon>
        <taxon>Craniata</taxon>
        <taxon>Vertebrata</taxon>
        <taxon>Euteleostomi</taxon>
        <taxon>Mammalia</taxon>
        <taxon>Eutheria</taxon>
        <taxon>Euarchontoglires</taxon>
        <taxon>Primates</taxon>
        <taxon>Haplorrhini</taxon>
        <taxon>Catarrhini</taxon>
        <taxon>Hominidae</taxon>
        <taxon>Homo</taxon>
    </lineage>
</organism>
<keyword id="KW-0225">Disease variant</keyword>
<keyword id="KW-1063">Hypotrichosis</keyword>
<keyword id="KW-1185">Reference proteome</keyword>
<keyword id="KW-0810">Translation regulation</keyword>
<protein>
    <recommendedName>
        <fullName evidence="4">Protein HRURF</fullName>
    </recommendedName>
    <alternativeName>
        <fullName evidence="4">HR upstream open reading frame protein</fullName>
    </alternativeName>
</protein>
<reference key="1">
    <citation type="journal article" date="2009" name="Nat. Genet.">
        <title>Loss-of-function mutations of an inhibitory upstream ORF in the human hairless transcript cause Marie Unna hereditary hypotrichosis.</title>
        <authorList>
            <person name="Wen Y."/>
            <person name="Liu Y."/>
            <person name="Xu Y."/>
            <person name="Zhao Y."/>
            <person name="Hua R."/>
            <person name="Wang K."/>
            <person name="Sun M."/>
            <person name="Li Y."/>
            <person name="Yang S."/>
            <person name="Zhang X.J."/>
            <person name="Kruse R."/>
            <person name="Cichon S."/>
            <person name="Betz R.C."/>
            <person name="Nothen M.M."/>
            <person name="van Steensel M.A."/>
            <person name="van Geel M."/>
            <person name="Steijlen P.M."/>
            <person name="Hohl D."/>
            <person name="Huber M."/>
            <person name="Dunnill G.S."/>
            <person name="Kennedy C."/>
            <person name="Messenger A."/>
            <person name="Munro C.S."/>
            <person name="Terrinoni A."/>
            <person name="Hovnanian A."/>
            <person name="Bodemer C."/>
            <person name="de Prost Y."/>
            <person name="Paller A.S."/>
            <person name="Irvine A.D."/>
            <person name="Sinclair R."/>
            <person name="Green J."/>
            <person name="Shang D."/>
            <person name="Liu Q."/>
            <person name="Luo Y."/>
            <person name="Jiang L."/>
            <person name="Chen H.D."/>
            <person name="Lo W.H."/>
            <person name="McLean W.H."/>
            <person name="He C.D."/>
            <person name="Zhang X."/>
        </authorList>
    </citation>
    <scope>NUCLEOTIDE SEQUENCE [MRNA]</scope>
    <scope>FUNCTION</scope>
    <scope>INVOLVEMENT IN HYPT4</scope>
    <scope>VARIANTS HYPT4 7-SER--PRO-34 DEL; ALA-25 AND HIS-28</scope>
    <scope>CHARACTERIZATION OF VARIANTS HYPT4 3-GLN--PRO-34 DEL; 7-SER--PRO-34 DEL; ASN-24; ALA-25; LYS-26 AND HIS-28</scope>
</reference>
<reference key="2">
    <citation type="journal article" date="2006" name="Nature">
        <title>DNA sequence and analysis of human chromosome 8.</title>
        <authorList>
            <person name="Nusbaum C."/>
            <person name="Mikkelsen T.S."/>
            <person name="Zody M.C."/>
            <person name="Asakawa S."/>
            <person name="Taudien S."/>
            <person name="Garber M."/>
            <person name="Kodira C.D."/>
            <person name="Schueler M.G."/>
            <person name="Shimizu A."/>
            <person name="Whittaker C.A."/>
            <person name="Chang J.L."/>
            <person name="Cuomo C.A."/>
            <person name="Dewar K."/>
            <person name="FitzGerald M.G."/>
            <person name="Yang X."/>
            <person name="Allen N.R."/>
            <person name="Anderson S."/>
            <person name="Asakawa T."/>
            <person name="Blechschmidt K."/>
            <person name="Bloom T."/>
            <person name="Borowsky M.L."/>
            <person name="Butler J."/>
            <person name="Cook A."/>
            <person name="Corum B."/>
            <person name="DeArellano K."/>
            <person name="DeCaprio D."/>
            <person name="Dooley K.T."/>
            <person name="Dorris L. III"/>
            <person name="Engels R."/>
            <person name="Gloeckner G."/>
            <person name="Hafez N."/>
            <person name="Hagopian D.S."/>
            <person name="Hall J.L."/>
            <person name="Ishikawa S.K."/>
            <person name="Jaffe D.B."/>
            <person name="Kamat A."/>
            <person name="Kudoh J."/>
            <person name="Lehmann R."/>
            <person name="Lokitsang T."/>
            <person name="Macdonald P."/>
            <person name="Major J.E."/>
            <person name="Matthews C.D."/>
            <person name="Mauceli E."/>
            <person name="Menzel U."/>
            <person name="Mihalev A.H."/>
            <person name="Minoshima S."/>
            <person name="Murayama Y."/>
            <person name="Naylor J.W."/>
            <person name="Nicol R."/>
            <person name="Nguyen C."/>
            <person name="O'Leary S.B."/>
            <person name="O'Neill K."/>
            <person name="Parker S.C.J."/>
            <person name="Polley A."/>
            <person name="Raymond C.K."/>
            <person name="Reichwald K."/>
            <person name="Rodriguez J."/>
            <person name="Sasaki T."/>
            <person name="Schilhabel M."/>
            <person name="Siddiqui R."/>
            <person name="Smith C.L."/>
            <person name="Sneddon T.P."/>
            <person name="Talamas J.A."/>
            <person name="Tenzin P."/>
            <person name="Topham K."/>
            <person name="Venkataraman V."/>
            <person name="Wen G."/>
            <person name="Yamazaki S."/>
            <person name="Young S.K."/>
            <person name="Zeng Q."/>
            <person name="Zimmer A.R."/>
            <person name="Rosenthal A."/>
            <person name="Birren B.W."/>
            <person name="Platzer M."/>
            <person name="Shimizu N."/>
            <person name="Lander E.S."/>
        </authorList>
    </citation>
    <scope>NUCLEOTIDE SEQUENCE [LARGE SCALE GENOMIC DNA]</scope>
</reference>
<reference key="3">
    <citation type="journal article" date="2000" name="Br. J. Dermatol.">
        <title>A distinct gene close to the hairless locus on chromosome 8p underlies hereditary Marie Unna type hypotrichosis in a German family.</title>
        <authorList>
            <person name="Cichon S."/>
            <person name="Kruse R."/>
            <person name="Hillmer A.M."/>
            <person name="Kukuk G."/>
            <person name="Anker M."/>
            <person name="Altland K."/>
            <person name="Knapp M."/>
            <person name="Propping P."/>
            <person name="Noethen M.M."/>
        </authorList>
    </citation>
    <scope>INVOLVEMENT IN HYPT4</scope>
    <scope>VARIANTS HYPT4 ALA-25 AND LYS-26</scope>
</reference>
<reference key="4">
    <citation type="journal article" date="2000" name="J. Invest. Dermatol.">
        <title>Marie Unna hereditary hypotrichosis gene maps to human chromosome 8p21 near hairless.</title>
        <authorList>
            <person name="Sreekumar G.P."/>
            <person name="Roberts J.L."/>
            <person name="Wong C.Q."/>
            <person name="Stenn K.S."/>
            <person name="Parimoo S."/>
        </authorList>
    </citation>
    <scope>INVOLVEMENT IN HYPT4</scope>
    <scope>VARIANTS HYPT4 3-GLN--PRO-34 DEL; ASN-24 AND ALA-25</scope>
</reference>
<comment type="function">
    <text evidence="3">May function as an inhibitory translational control element that can negatively regulate protein translation of HR gene.</text>
</comment>
<comment type="disease" evidence="1 2 3">
    <disease id="DI-02514">
        <name>Hypotrichosis 4</name>
        <acronym>HYPT4</acronym>
        <description>An autosomal dominant condition characterized by reduced amount of hair, alopecia, little or no eyebrows, eyelashes or body hair, and coarse, wiry, twisted hair in early childhood.</description>
        <dbReference type="MIM" id="146550"/>
    </disease>
    <text>The disease is caused by variants affecting the gene represented in this entry.</text>
</comment>
<sequence>MAQPTASAQKLVRPIRAVCRILQIPESDPSNLRP</sequence>
<accession>P0DUH7</accession>
<feature type="chain" id="PRO_0000453958" description="Protein HRURF">
    <location>
        <begin position="1"/>
        <end position="34"/>
    </location>
</feature>
<feature type="sequence variant" id="VAR_085203" description="In HYPT4; uncertain significance; increases HR protein expression; abolishes the inhibitory effect on HR translation; dbSNP:rs267606867." evidence="1 3">
    <location>
        <begin position="3"/>
        <end position="34"/>
    </location>
</feature>
<feature type="sequence variant" id="VAR_085204" description="In HYPT4; uncertain significance; increases HR protein expression; abolishes the inhibitory effect on HR translation." evidence="3">
    <location>
        <begin position="7"/>
        <end position="34"/>
    </location>
</feature>
<feature type="sequence variant" id="VAR_085205" description="In HYPT4; uncertain significance; increases HR protein expression; abolishes the inhibitory effect on HR translation." evidence="1 3">
    <original>I</original>
    <variation>N</variation>
    <location>
        <position position="24"/>
    </location>
</feature>
<feature type="sequence variant" id="VAR_085206" description="In HYPT4; uncertain significance; increases HR protein expression; abolishes the inhibitory effect on HR translation; dbSNP:rs267606868." evidence="1 2 3">
    <original>P</original>
    <variation>A</variation>
    <location>
        <position position="25"/>
    </location>
</feature>
<feature type="sequence variant" id="VAR_085207" description="In HYPT4; uncertain significance; increases HR protein expression; abolishes the inhibitory effect on HR translation." evidence="2 3">
    <original>E</original>
    <variation>K</variation>
    <location>
        <position position="26"/>
    </location>
</feature>
<feature type="sequence variant" id="VAR_085208" description="In HYPT4; uncertain significance; increases HR protein expression; abolishes the inhibitory effect on HR translation." evidence="3">
    <original>D</original>
    <variation>H</variation>
    <location>
        <position position="28"/>
    </location>
</feature>